<name>EFP_STAAC</name>
<feature type="chain" id="PRO_0000094328" description="Elongation factor P">
    <location>
        <begin position="1"/>
        <end position="185"/>
    </location>
</feature>
<protein>
    <recommendedName>
        <fullName evidence="1">Elongation factor P</fullName>
        <shortName evidence="1">EF-P</shortName>
    </recommendedName>
</protein>
<reference key="1">
    <citation type="journal article" date="2005" name="J. Bacteriol.">
        <title>Insights on evolution of virulence and resistance from the complete genome analysis of an early methicillin-resistant Staphylococcus aureus strain and a biofilm-producing methicillin-resistant Staphylococcus epidermidis strain.</title>
        <authorList>
            <person name="Gill S.R."/>
            <person name="Fouts D.E."/>
            <person name="Archer G.L."/>
            <person name="Mongodin E.F."/>
            <person name="DeBoy R.T."/>
            <person name="Ravel J."/>
            <person name="Paulsen I.T."/>
            <person name="Kolonay J.F."/>
            <person name="Brinkac L.M."/>
            <person name="Beanan M.J."/>
            <person name="Dodson R.J."/>
            <person name="Daugherty S.C."/>
            <person name="Madupu R."/>
            <person name="Angiuoli S.V."/>
            <person name="Durkin A.S."/>
            <person name="Haft D.H."/>
            <person name="Vamathevan J.J."/>
            <person name="Khouri H."/>
            <person name="Utterback T.R."/>
            <person name="Lee C."/>
            <person name="Dimitrov G."/>
            <person name="Jiang L."/>
            <person name="Qin H."/>
            <person name="Weidman J."/>
            <person name="Tran K."/>
            <person name="Kang K.H."/>
            <person name="Hance I.R."/>
            <person name="Nelson K.E."/>
            <person name="Fraser C.M."/>
        </authorList>
    </citation>
    <scope>NUCLEOTIDE SEQUENCE [LARGE SCALE GENOMIC DNA]</scope>
    <source>
        <strain>COL</strain>
    </source>
</reference>
<gene>
    <name evidence="1" type="primary">efp</name>
    <name type="ordered locus">SACOL1587</name>
</gene>
<accession>Q5HFN0</accession>
<organism>
    <name type="scientific">Staphylococcus aureus (strain COL)</name>
    <dbReference type="NCBI Taxonomy" id="93062"/>
    <lineage>
        <taxon>Bacteria</taxon>
        <taxon>Bacillati</taxon>
        <taxon>Bacillota</taxon>
        <taxon>Bacilli</taxon>
        <taxon>Bacillales</taxon>
        <taxon>Staphylococcaceae</taxon>
        <taxon>Staphylococcus</taxon>
    </lineage>
</organism>
<proteinExistence type="inferred from homology"/>
<keyword id="KW-0963">Cytoplasm</keyword>
<keyword id="KW-0251">Elongation factor</keyword>
<keyword id="KW-0648">Protein biosynthesis</keyword>
<dbReference type="EMBL" id="CP000046">
    <property type="protein sequence ID" value="AAW38203.1"/>
    <property type="molecule type" value="Genomic_DNA"/>
</dbReference>
<dbReference type="RefSeq" id="WP_000626504.1">
    <property type="nucleotide sequence ID" value="NZ_JBGOFO010000003.1"/>
</dbReference>
<dbReference type="SMR" id="Q5HFN0"/>
<dbReference type="KEGG" id="sac:SACOL1587"/>
<dbReference type="HOGENOM" id="CLU_074944_0_1_9"/>
<dbReference type="UniPathway" id="UPA00345"/>
<dbReference type="Proteomes" id="UP000000530">
    <property type="component" value="Chromosome"/>
</dbReference>
<dbReference type="GO" id="GO:0005737">
    <property type="term" value="C:cytoplasm"/>
    <property type="evidence" value="ECO:0007669"/>
    <property type="project" value="UniProtKB-SubCell"/>
</dbReference>
<dbReference type="GO" id="GO:0003746">
    <property type="term" value="F:translation elongation factor activity"/>
    <property type="evidence" value="ECO:0007669"/>
    <property type="project" value="UniProtKB-UniRule"/>
</dbReference>
<dbReference type="GO" id="GO:0043043">
    <property type="term" value="P:peptide biosynthetic process"/>
    <property type="evidence" value="ECO:0007669"/>
    <property type="project" value="InterPro"/>
</dbReference>
<dbReference type="CDD" id="cd04470">
    <property type="entry name" value="S1_EF-P_repeat_1"/>
    <property type="match status" value="1"/>
</dbReference>
<dbReference type="CDD" id="cd05794">
    <property type="entry name" value="S1_EF-P_repeat_2"/>
    <property type="match status" value="1"/>
</dbReference>
<dbReference type="FunFam" id="2.30.30.30:FF:000010">
    <property type="entry name" value="Elongation factor P"/>
    <property type="match status" value="1"/>
</dbReference>
<dbReference type="FunFam" id="2.40.50.140:FF:000004">
    <property type="entry name" value="Elongation factor P"/>
    <property type="match status" value="1"/>
</dbReference>
<dbReference type="FunFam" id="2.40.50.140:FF:000009">
    <property type="entry name" value="Elongation factor P"/>
    <property type="match status" value="1"/>
</dbReference>
<dbReference type="Gene3D" id="2.30.30.30">
    <property type="match status" value="1"/>
</dbReference>
<dbReference type="Gene3D" id="2.40.50.140">
    <property type="entry name" value="Nucleic acid-binding proteins"/>
    <property type="match status" value="2"/>
</dbReference>
<dbReference type="HAMAP" id="MF_00141">
    <property type="entry name" value="EF_P"/>
    <property type="match status" value="1"/>
</dbReference>
<dbReference type="InterPro" id="IPR015365">
    <property type="entry name" value="Elong-fact-P_C"/>
</dbReference>
<dbReference type="InterPro" id="IPR012340">
    <property type="entry name" value="NA-bd_OB-fold"/>
</dbReference>
<dbReference type="InterPro" id="IPR014722">
    <property type="entry name" value="Rib_uL2_dom2"/>
</dbReference>
<dbReference type="InterPro" id="IPR020599">
    <property type="entry name" value="Transl_elong_fac_P/YeiP"/>
</dbReference>
<dbReference type="InterPro" id="IPR013185">
    <property type="entry name" value="Transl_elong_KOW-like"/>
</dbReference>
<dbReference type="InterPro" id="IPR001059">
    <property type="entry name" value="Transl_elong_P/YeiP_cen"/>
</dbReference>
<dbReference type="InterPro" id="IPR013852">
    <property type="entry name" value="Transl_elong_P/YeiP_CS"/>
</dbReference>
<dbReference type="InterPro" id="IPR011768">
    <property type="entry name" value="Transl_elongation_fac_P"/>
</dbReference>
<dbReference type="InterPro" id="IPR008991">
    <property type="entry name" value="Translation_prot_SH3-like_sf"/>
</dbReference>
<dbReference type="NCBIfam" id="TIGR00038">
    <property type="entry name" value="efp"/>
    <property type="match status" value="1"/>
</dbReference>
<dbReference type="NCBIfam" id="NF001810">
    <property type="entry name" value="PRK00529.1"/>
    <property type="match status" value="1"/>
</dbReference>
<dbReference type="PANTHER" id="PTHR30053">
    <property type="entry name" value="ELONGATION FACTOR P"/>
    <property type="match status" value="1"/>
</dbReference>
<dbReference type="PANTHER" id="PTHR30053:SF12">
    <property type="entry name" value="ELONGATION FACTOR P (EF-P) FAMILY PROTEIN"/>
    <property type="match status" value="1"/>
</dbReference>
<dbReference type="Pfam" id="PF01132">
    <property type="entry name" value="EFP"/>
    <property type="match status" value="1"/>
</dbReference>
<dbReference type="Pfam" id="PF08207">
    <property type="entry name" value="EFP_N"/>
    <property type="match status" value="1"/>
</dbReference>
<dbReference type="Pfam" id="PF09285">
    <property type="entry name" value="Elong-fact-P_C"/>
    <property type="match status" value="1"/>
</dbReference>
<dbReference type="PIRSF" id="PIRSF005901">
    <property type="entry name" value="EF-P"/>
    <property type="match status" value="1"/>
</dbReference>
<dbReference type="SMART" id="SM01185">
    <property type="entry name" value="EFP"/>
    <property type="match status" value="1"/>
</dbReference>
<dbReference type="SMART" id="SM00841">
    <property type="entry name" value="Elong-fact-P_C"/>
    <property type="match status" value="1"/>
</dbReference>
<dbReference type="SUPFAM" id="SSF50249">
    <property type="entry name" value="Nucleic acid-binding proteins"/>
    <property type="match status" value="2"/>
</dbReference>
<dbReference type="SUPFAM" id="SSF50104">
    <property type="entry name" value="Translation proteins SH3-like domain"/>
    <property type="match status" value="1"/>
</dbReference>
<dbReference type="PROSITE" id="PS01275">
    <property type="entry name" value="EFP"/>
    <property type="match status" value="1"/>
</dbReference>
<comment type="function">
    <text evidence="1">Involved in peptide bond synthesis. Stimulates efficient translation and peptide-bond synthesis on native or reconstituted 70S ribosomes in vitro. Probably functions indirectly by altering the affinity of the ribosome for aminoacyl-tRNA, thus increasing their reactivity as acceptors for peptidyl transferase.</text>
</comment>
<comment type="pathway">
    <text evidence="1">Protein biosynthesis; polypeptide chain elongation.</text>
</comment>
<comment type="subcellular location">
    <subcellularLocation>
        <location evidence="1">Cytoplasm</location>
    </subcellularLocation>
</comment>
<comment type="similarity">
    <text evidence="1">Belongs to the elongation factor P family.</text>
</comment>
<evidence type="ECO:0000255" key="1">
    <source>
        <dbReference type="HAMAP-Rule" id="MF_00141"/>
    </source>
</evidence>
<sequence length="185" mass="20554">MISVNDFKTGLTISVDNAIWKVIDFQHVKPGKGSAFVRSKLRNLRTGAIQEKTFRAGEKVEPAMIENRRMQYLYADGDNHVFMDNESFEQTELSSDYLKEELNYLKEGMEVQIQTYEGETIGVELPKTVELTVTETEPGIKGDTATGATKSATVETGYTLNVPLFVNEGDVLIINTGDGSYISRG</sequence>